<dbReference type="EC" id="3.4.-.-"/>
<dbReference type="EMBL" id="BA000043">
    <property type="protein sequence ID" value="BAD76517.1"/>
    <property type="status" value="ALT_INIT"/>
    <property type="molecule type" value="Genomic_DNA"/>
</dbReference>
<dbReference type="RefSeq" id="WP_012820744.1">
    <property type="nucleotide sequence ID" value="NC_006510.1"/>
</dbReference>
<dbReference type="STRING" id="235909.GK2232"/>
<dbReference type="MEROPS" id="M82.001"/>
<dbReference type="GeneID" id="32064084"/>
<dbReference type="KEGG" id="gka:GK2232"/>
<dbReference type="eggNOG" id="COG2339">
    <property type="taxonomic scope" value="Bacteria"/>
</dbReference>
<dbReference type="HOGENOM" id="CLU_081250_0_0_9"/>
<dbReference type="Proteomes" id="UP000001172">
    <property type="component" value="Chromosome"/>
</dbReference>
<dbReference type="GO" id="GO:0005886">
    <property type="term" value="C:plasma membrane"/>
    <property type="evidence" value="ECO:0007669"/>
    <property type="project" value="UniProtKB-SubCell"/>
</dbReference>
<dbReference type="GO" id="GO:0008233">
    <property type="term" value="F:peptidase activity"/>
    <property type="evidence" value="ECO:0007669"/>
    <property type="project" value="UniProtKB-KW"/>
</dbReference>
<dbReference type="GO" id="GO:0006508">
    <property type="term" value="P:proteolysis"/>
    <property type="evidence" value="ECO:0007669"/>
    <property type="project" value="UniProtKB-KW"/>
</dbReference>
<dbReference type="InterPro" id="IPR023596">
    <property type="entry name" value="Peptidase_PrsW_arch/bac"/>
</dbReference>
<dbReference type="InterPro" id="IPR026898">
    <property type="entry name" value="PrsW"/>
</dbReference>
<dbReference type="NCBIfam" id="NF033739">
    <property type="entry name" value="intramemb_PrsW"/>
    <property type="match status" value="1"/>
</dbReference>
<dbReference type="PANTHER" id="PTHR36844">
    <property type="entry name" value="PROTEASE PRSW"/>
    <property type="match status" value="1"/>
</dbReference>
<dbReference type="PANTHER" id="PTHR36844:SF1">
    <property type="entry name" value="PROTEASE PRSW"/>
    <property type="match status" value="1"/>
</dbReference>
<dbReference type="Pfam" id="PF13367">
    <property type="entry name" value="PrsW-protease"/>
    <property type="match status" value="1"/>
</dbReference>
<dbReference type="PIRSF" id="PIRSF016933">
    <property type="entry name" value="PrsW"/>
    <property type="match status" value="1"/>
</dbReference>
<name>PRSW_GEOKA</name>
<comment type="function">
    <text evidence="1">Involved in the degradation of specific anti-sigma factors. Responsible for Site-1 cleavage of the RsiW anti-sigma factor. This results, after two other proteolytic steps catalyzed by the RasP and ClpXP proteases, in the release of SigW and the transcription activation of the genes under the control of the sigma-W factor (By similarity).</text>
</comment>
<comment type="subcellular location">
    <subcellularLocation>
        <location evidence="3">Cell membrane</location>
        <topology evidence="3">Multi-pass membrane protein</topology>
    </subcellularLocation>
</comment>
<comment type="similarity">
    <text evidence="3">Belongs to the protease PrsW family.</text>
</comment>
<comment type="sequence caution" evidence="3">
    <conflict type="erroneous initiation">
        <sequence resource="EMBL-CDS" id="BAD76517"/>
    </conflict>
    <text>Extended N-terminus.</text>
</comment>
<accession>Q5KXR9</accession>
<evidence type="ECO:0000250" key="1"/>
<evidence type="ECO:0000255" key="2"/>
<evidence type="ECO:0000305" key="3"/>
<protein>
    <recommendedName>
        <fullName>Protease PrsW</fullName>
        <ecNumber>3.4.-.-</ecNumber>
    </recommendedName>
    <alternativeName>
        <fullName>Protease responsible for activating sigma-W</fullName>
    </alternativeName>
</protein>
<keyword id="KW-1003">Cell membrane</keyword>
<keyword id="KW-0378">Hydrolase</keyword>
<keyword id="KW-0472">Membrane</keyword>
<keyword id="KW-0645">Protease</keyword>
<keyword id="KW-1185">Reference proteome</keyword>
<keyword id="KW-0812">Transmembrane</keyword>
<keyword id="KW-1133">Transmembrane helix</keyword>
<feature type="chain" id="PRO_0000248137" description="Protease PrsW">
    <location>
        <begin position="1"/>
        <end position="225"/>
    </location>
</feature>
<feature type="transmembrane region" description="Helical" evidence="2">
    <location>
        <begin position="1"/>
        <end position="23"/>
    </location>
</feature>
<feature type="topological domain" description="Cytoplasmic" evidence="2">
    <location>
        <begin position="24"/>
        <end position="30"/>
    </location>
</feature>
<feature type="transmembrane region" description="Helical" evidence="2">
    <location>
        <begin position="31"/>
        <end position="53"/>
    </location>
</feature>
<feature type="topological domain" description="Extracellular" evidence="2">
    <location>
        <begin position="54"/>
        <end position="99"/>
    </location>
</feature>
<feature type="transmembrane region" description="Helical" evidence="2">
    <location>
        <begin position="100"/>
        <end position="121"/>
    </location>
</feature>
<feature type="topological domain" description="Cytoplasmic" evidence="2">
    <location>
        <begin position="122"/>
        <end position="129"/>
    </location>
</feature>
<feature type="transmembrane region" description="Helical" evidence="2">
    <location>
        <begin position="130"/>
        <end position="151"/>
    </location>
</feature>
<feature type="topological domain" description="Extracellular" evidence="2">
    <location>
        <begin position="152"/>
        <end position="179"/>
    </location>
</feature>
<feature type="transmembrane region" description="Helical" evidence="2">
    <location>
        <begin position="180"/>
        <end position="202"/>
    </location>
</feature>
<feature type="topological domain" description="Cytoplasmic" evidence="2">
    <location>
        <begin position="203"/>
        <end position="225"/>
    </location>
</feature>
<organism>
    <name type="scientific">Geobacillus kaustophilus (strain HTA426)</name>
    <dbReference type="NCBI Taxonomy" id="235909"/>
    <lineage>
        <taxon>Bacteria</taxon>
        <taxon>Bacillati</taxon>
        <taxon>Bacillota</taxon>
        <taxon>Bacilli</taxon>
        <taxon>Bacillales</taxon>
        <taxon>Anoxybacillaceae</taxon>
        <taxon>Geobacillus</taxon>
        <taxon>Geobacillus thermoleovorans group</taxon>
    </lineage>
</organism>
<sequence>MFSLISAGVAPGVALLSYFYLKDEYEAEPLSFVLRMFLFGVLLVFPIMFIQYVLAAEGIVASPAAEAFLSAALLEEFVKWFVVYFFVYDHDEFDEPYDGIVYSASVSLGFATLENILYLLANGVETAIARALLPVSSHALFSVIMGFYFGKAKFAVKKRRYYLWASFLLPFFLHGVYDWLLLAKERWGYYMGLFMLALWWAALRKVKQAKGYARPQAVPPVKSQA</sequence>
<proteinExistence type="inferred from homology"/>
<reference key="1">
    <citation type="journal article" date="2004" name="Nucleic Acids Res.">
        <title>Thermoadaptation trait revealed by the genome sequence of thermophilic Geobacillus kaustophilus.</title>
        <authorList>
            <person name="Takami H."/>
            <person name="Takaki Y."/>
            <person name="Chee G.-J."/>
            <person name="Nishi S."/>
            <person name="Shimamura S."/>
            <person name="Suzuki H."/>
            <person name="Matsui S."/>
            <person name="Uchiyama I."/>
        </authorList>
    </citation>
    <scope>NUCLEOTIDE SEQUENCE [LARGE SCALE GENOMIC DNA]</scope>
    <source>
        <strain>HTA426</strain>
    </source>
</reference>
<gene>
    <name type="primary">prsW</name>
    <name type="ordered locus">GK2232</name>
</gene>